<evidence type="ECO:0000250" key="1">
    <source>
        <dbReference type="UniProtKB" id="P0C050"/>
    </source>
</evidence>
<evidence type="ECO:0000305" key="2"/>
<feature type="chain" id="PRO_0000087044" description="Type VII secretion system accessory factor EsaB">
    <location>
        <begin position="1"/>
        <end position="80"/>
    </location>
</feature>
<accession>Q99WU1</accession>
<reference key="1">
    <citation type="journal article" date="2001" name="Lancet">
        <title>Whole genome sequencing of meticillin-resistant Staphylococcus aureus.</title>
        <authorList>
            <person name="Kuroda M."/>
            <person name="Ohta T."/>
            <person name="Uchiyama I."/>
            <person name="Baba T."/>
            <person name="Yuzawa H."/>
            <person name="Kobayashi I."/>
            <person name="Cui L."/>
            <person name="Oguchi A."/>
            <person name="Aoki K."/>
            <person name="Nagai Y."/>
            <person name="Lian J.-Q."/>
            <person name="Ito T."/>
            <person name="Kanamori M."/>
            <person name="Matsumaru H."/>
            <person name="Maruyama A."/>
            <person name="Murakami H."/>
            <person name="Hosoyama A."/>
            <person name="Mizutani-Ui Y."/>
            <person name="Takahashi N.K."/>
            <person name="Sawano T."/>
            <person name="Inoue R."/>
            <person name="Kaito C."/>
            <person name="Sekimizu K."/>
            <person name="Hirakawa H."/>
            <person name="Kuhara S."/>
            <person name="Goto S."/>
            <person name="Yabuzaki J."/>
            <person name="Kanehisa M."/>
            <person name="Yamashita A."/>
            <person name="Oshima K."/>
            <person name="Furuya K."/>
            <person name="Yoshino C."/>
            <person name="Shiba T."/>
            <person name="Hattori M."/>
            <person name="Ogasawara N."/>
            <person name="Hayashi H."/>
            <person name="Hiramatsu K."/>
        </authorList>
    </citation>
    <scope>NUCLEOTIDE SEQUENCE [LARGE SCALE GENOMIC DNA]</scope>
    <source>
        <strain>Mu50 / ATCC 700699</strain>
    </source>
</reference>
<sequence>MNQHVKVTFDFTNYNYGTYDLAVPAYLPIKNLIALVLDSLDISIFDVNTQIKVMTKGQLLVENDRLIDYQIADGDILKLL</sequence>
<comment type="function">
    <text evidence="1">Seems to regulate secreted factors that contribute to the establishment of persistent infections in the host.</text>
</comment>
<comment type="subcellular location">
    <subcellularLocation>
        <location evidence="1">Cytoplasm</location>
    </subcellularLocation>
</comment>
<comment type="similarity">
    <text evidence="2">Belongs to the EsaB family.</text>
</comment>
<name>ESAB_STAAM</name>
<proteinExistence type="inferred from homology"/>
<protein>
    <recommendedName>
        <fullName evidence="1">Type VII secretion system accessory factor EsaB</fullName>
    </recommendedName>
</protein>
<dbReference type="EMBL" id="BA000017">
    <property type="protein sequence ID" value="BAB56447.1"/>
    <property type="molecule type" value="Genomic_DNA"/>
</dbReference>
<dbReference type="RefSeq" id="WP_001071606.1">
    <property type="nucleotide sequence ID" value="NC_002758.2"/>
</dbReference>
<dbReference type="SMR" id="Q99WU1"/>
<dbReference type="TCDB" id="3.A.7.17.1">
    <property type="family name" value="the type iv (conjugal dna-protein transfer or virb) secretory pathway (ivsp) family"/>
</dbReference>
<dbReference type="GeneID" id="98344609"/>
<dbReference type="KEGG" id="sav:SAV0285"/>
<dbReference type="HOGENOM" id="CLU_189011_2_0_9"/>
<dbReference type="PhylomeDB" id="Q99WU1"/>
<dbReference type="Proteomes" id="UP000002481">
    <property type="component" value="Chromosome"/>
</dbReference>
<dbReference type="GO" id="GO:0005737">
    <property type="term" value="C:cytoplasm"/>
    <property type="evidence" value="ECO:0007669"/>
    <property type="project" value="UniProtKB-SubCell"/>
</dbReference>
<dbReference type="Gene3D" id="3.10.20.90">
    <property type="entry name" value="Phosphatidylinositol 3-kinase Catalytic Subunit, Chain A, domain 1"/>
    <property type="match status" value="1"/>
</dbReference>
<dbReference type="InterPro" id="IPR014921">
    <property type="entry name" value="EsaB"/>
</dbReference>
<dbReference type="InterPro" id="IPR029071">
    <property type="entry name" value="Ubiquitin-like_domsf"/>
</dbReference>
<dbReference type="InterPro" id="IPR024962">
    <property type="entry name" value="YukD-like"/>
</dbReference>
<dbReference type="Pfam" id="PF08817">
    <property type="entry name" value="YukD"/>
    <property type="match status" value="1"/>
</dbReference>
<dbReference type="PIRSF" id="PIRSF037793">
    <property type="entry name" value="DUF_ubiquitin-like_YukD"/>
    <property type="match status" value="1"/>
</dbReference>
<dbReference type="SUPFAM" id="SSF54236">
    <property type="entry name" value="Ubiquitin-like"/>
    <property type="match status" value="1"/>
</dbReference>
<organism>
    <name type="scientific">Staphylococcus aureus (strain Mu50 / ATCC 700699)</name>
    <dbReference type="NCBI Taxonomy" id="158878"/>
    <lineage>
        <taxon>Bacteria</taxon>
        <taxon>Bacillati</taxon>
        <taxon>Bacillota</taxon>
        <taxon>Bacilli</taxon>
        <taxon>Bacillales</taxon>
        <taxon>Staphylococcaceae</taxon>
        <taxon>Staphylococcus</taxon>
    </lineage>
</organism>
<keyword id="KW-0963">Cytoplasm</keyword>
<keyword id="KW-0843">Virulence</keyword>
<gene>
    <name evidence="1" type="primary">esaB</name>
    <name type="ordered locus">SAV0285</name>
</gene>